<sequence>MQICLMDETGATDGALSVLAARWGLEHDEDNPMALVLTPQHLELRKRDEPKLGGIFVDFVGGAMAHRRKFGGGRGEAVAKAVGIKGDYLPDVVDATAGLGRDAFVLASVGCRVRMLERNPVVAALLDDGLTRGYADADIGGWLQERLQLIHASSLTALTDITPRPQVVYLDPMFPHRQKSALVKKEMRVFQSLVGPDLDADGLLEPARQLATKRVVVKRPDYAPPLADVATPNAIVTKEHRFDIYAGTPLTE</sequence>
<organism>
    <name type="scientific">Salmonella typhi</name>
    <dbReference type="NCBI Taxonomy" id="90370"/>
    <lineage>
        <taxon>Bacteria</taxon>
        <taxon>Pseudomonadati</taxon>
        <taxon>Pseudomonadota</taxon>
        <taxon>Gammaproteobacteria</taxon>
        <taxon>Enterobacterales</taxon>
        <taxon>Enterobacteriaceae</taxon>
        <taxon>Salmonella</taxon>
    </lineage>
</organism>
<proteinExistence type="inferred from homology"/>
<protein>
    <recommendedName>
        <fullName evidence="1">Ribosomal RNA small subunit methyltransferase J</fullName>
        <ecNumber evidence="1">2.1.1.242</ecNumber>
    </recommendedName>
    <alternativeName>
        <fullName evidence="1">16S rRNA m2G1516 methyltransferase</fullName>
    </alternativeName>
    <alternativeName>
        <fullName evidence="1">rRNA (guanine-N(2)-)-methyltransferase</fullName>
    </alternativeName>
</protein>
<evidence type="ECO:0000255" key="1">
    <source>
        <dbReference type="HAMAP-Rule" id="MF_01523"/>
    </source>
</evidence>
<name>RSMJ_SALTI</name>
<comment type="function">
    <text evidence="1">Specifically methylates the guanosine in position 1516 of 16S rRNA.</text>
</comment>
<comment type="catalytic activity">
    <reaction evidence="1">
        <text>guanosine(1516) in 16S rRNA + S-adenosyl-L-methionine = N(2)-methylguanosine(1516) in 16S rRNA + S-adenosyl-L-homocysteine + H(+)</text>
        <dbReference type="Rhea" id="RHEA:43220"/>
        <dbReference type="Rhea" id="RHEA-COMP:10412"/>
        <dbReference type="Rhea" id="RHEA-COMP:10413"/>
        <dbReference type="ChEBI" id="CHEBI:15378"/>
        <dbReference type="ChEBI" id="CHEBI:57856"/>
        <dbReference type="ChEBI" id="CHEBI:59789"/>
        <dbReference type="ChEBI" id="CHEBI:74269"/>
        <dbReference type="ChEBI" id="CHEBI:74481"/>
        <dbReference type="EC" id="2.1.1.242"/>
    </reaction>
</comment>
<comment type="subcellular location">
    <subcellularLocation>
        <location evidence="1">Cytoplasm</location>
    </subcellularLocation>
</comment>
<comment type="similarity">
    <text evidence="1">Belongs to the methyltransferase superfamily. RsmJ family.</text>
</comment>
<keyword id="KW-0963">Cytoplasm</keyword>
<keyword id="KW-0489">Methyltransferase</keyword>
<keyword id="KW-0698">rRNA processing</keyword>
<keyword id="KW-0949">S-adenosyl-L-methionine</keyword>
<keyword id="KW-0808">Transferase</keyword>
<accession>Q8Z270</accession>
<accession>Q7C600</accession>
<dbReference type="EC" id="2.1.1.242" evidence="1"/>
<dbReference type="EMBL" id="AL513382">
    <property type="protein sequence ID" value="CAD08031.1"/>
    <property type="molecule type" value="Genomic_DNA"/>
</dbReference>
<dbReference type="EMBL" id="AE014613">
    <property type="protein sequence ID" value="AAO71396.1"/>
    <property type="molecule type" value="Genomic_DNA"/>
</dbReference>
<dbReference type="RefSeq" id="NP_458324.1">
    <property type="nucleotide sequence ID" value="NC_003198.1"/>
</dbReference>
<dbReference type="RefSeq" id="WP_001165126.1">
    <property type="nucleotide sequence ID" value="NZ_WSUR01000001.1"/>
</dbReference>
<dbReference type="SMR" id="Q8Z270"/>
<dbReference type="STRING" id="220341.gene:17588044"/>
<dbReference type="KEGG" id="stt:t3923"/>
<dbReference type="KEGG" id="sty:STY4210"/>
<dbReference type="PATRIC" id="fig|220341.7.peg.4299"/>
<dbReference type="eggNOG" id="COG0742">
    <property type="taxonomic scope" value="Bacteria"/>
</dbReference>
<dbReference type="HOGENOM" id="CLU_076324_0_0_6"/>
<dbReference type="OMA" id="YDIYPKK"/>
<dbReference type="OrthoDB" id="3191794at2"/>
<dbReference type="Proteomes" id="UP000000541">
    <property type="component" value="Chromosome"/>
</dbReference>
<dbReference type="Proteomes" id="UP000002670">
    <property type="component" value="Chromosome"/>
</dbReference>
<dbReference type="GO" id="GO:0005737">
    <property type="term" value="C:cytoplasm"/>
    <property type="evidence" value="ECO:0007669"/>
    <property type="project" value="UniProtKB-SubCell"/>
</dbReference>
<dbReference type="GO" id="GO:0008990">
    <property type="term" value="F:rRNA (guanine-N2-)-methyltransferase activity"/>
    <property type="evidence" value="ECO:0007669"/>
    <property type="project" value="UniProtKB-UniRule"/>
</dbReference>
<dbReference type="CDD" id="cd02440">
    <property type="entry name" value="AdoMet_MTases"/>
    <property type="match status" value="1"/>
</dbReference>
<dbReference type="FunFam" id="3.40.1630.10:FF:000001">
    <property type="entry name" value="Ribosomal RNA small subunit methyltransferase J"/>
    <property type="match status" value="1"/>
</dbReference>
<dbReference type="FunFam" id="3.40.50.150:FF:000072">
    <property type="entry name" value="Ribosomal RNA small subunit methyltransferase J"/>
    <property type="match status" value="1"/>
</dbReference>
<dbReference type="Gene3D" id="3.40.50.150">
    <property type="entry name" value="Vaccinia Virus protein VP39"/>
    <property type="match status" value="1"/>
</dbReference>
<dbReference type="Gene3D" id="3.40.1630.10">
    <property type="entry name" value="YhiQ-like domain"/>
    <property type="match status" value="1"/>
</dbReference>
<dbReference type="HAMAP" id="MF_01523">
    <property type="entry name" value="16SrRNA_methyltr_J"/>
    <property type="match status" value="1"/>
</dbReference>
<dbReference type="InterPro" id="IPR007536">
    <property type="entry name" value="16SrRNA_methylTrfase_J"/>
</dbReference>
<dbReference type="InterPro" id="IPR029063">
    <property type="entry name" value="SAM-dependent_MTases_sf"/>
</dbReference>
<dbReference type="NCBIfam" id="NF008012">
    <property type="entry name" value="PRK10742.1"/>
    <property type="match status" value="1"/>
</dbReference>
<dbReference type="PANTHER" id="PTHR36112">
    <property type="entry name" value="RIBOSOMAL RNA SMALL SUBUNIT METHYLTRANSFERASE J"/>
    <property type="match status" value="1"/>
</dbReference>
<dbReference type="PANTHER" id="PTHR36112:SF1">
    <property type="entry name" value="RIBOSOMAL RNA SMALL SUBUNIT METHYLTRANSFERASE J"/>
    <property type="match status" value="1"/>
</dbReference>
<dbReference type="Pfam" id="PF04445">
    <property type="entry name" value="SAM_MT"/>
    <property type="match status" value="1"/>
</dbReference>
<dbReference type="SUPFAM" id="SSF53335">
    <property type="entry name" value="S-adenosyl-L-methionine-dependent methyltransferases"/>
    <property type="match status" value="1"/>
</dbReference>
<reference key="1">
    <citation type="journal article" date="2001" name="Nature">
        <title>Complete genome sequence of a multiple drug resistant Salmonella enterica serovar Typhi CT18.</title>
        <authorList>
            <person name="Parkhill J."/>
            <person name="Dougan G."/>
            <person name="James K.D."/>
            <person name="Thomson N.R."/>
            <person name="Pickard D."/>
            <person name="Wain J."/>
            <person name="Churcher C.M."/>
            <person name="Mungall K.L."/>
            <person name="Bentley S.D."/>
            <person name="Holden M.T.G."/>
            <person name="Sebaihia M."/>
            <person name="Baker S."/>
            <person name="Basham D."/>
            <person name="Brooks K."/>
            <person name="Chillingworth T."/>
            <person name="Connerton P."/>
            <person name="Cronin A."/>
            <person name="Davis P."/>
            <person name="Davies R.M."/>
            <person name="Dowd L."/>
            <person name="White N."/>
            <person name="Farrar J."/>
            <person name="Feltwell T."/>
            <person name="Hamlin N."/>
            <person name="Haque A."/>
            <person name="Hien T.T."/>
            <person name="Holroyd S."/>
            <person name="Jagels K."/>
            <person name="Krogh A."/>
            <person name="Larsen T.S."/>
            <person name="Leather S."/>
            <person name="Moule S."/>
            <person name="O'Gaora P."/>
            <person name="Parry C."/>
            <person name="Quail M.A."/>
            <person name="Rutherford K.M."/>
            <person name="Simmonds M."/>
            <person name="Skelton J."/>
            <person name="Stevens K."/>
            <person name="Whitehead S."/>
            <person name="Barrell B.G."/>
        </authorList>
    </citation>
    <scope>NUCLEOTIDE SEQUENCE [LARGE SCALE GENOMIC DNA]</scope>
    <source>
        <strain>CT18</strain>
    </source>
</reference>
<reference key="2">
    <citation type="journal article" date="2003" name="J. Bacteriol.">
        <title>Comparative genomics of Salmonella enterica serovar Typhi strains Ty2 and CT18.</title>
        <authorList>
            <person name="Deng W."/>
            <person name="Liou S.-R."/>
            <person name="Plunkett G. III"/>
            <person name="Mayhew G.F."/>
            <person name="Rose D.J."/>
            <person name="Burland V."/>
            <person name="Kodoyianni V."/>
            <person name="Schwartz D.C."/>
            <person name="Blattner F.R."/>
        </authorList>
    </citation>
    <scope>NUCLEOTIDE SEQUENCE [LARGE SCALE GENOMIC DNA]</scope>
    <source>
        <strain>ATCC 700931 / Ty2</strain>
    </source>
</reference>
<gene>
    <name evidence="1" type="primary">rsmJ</name>
    <name type="synonym">yhiQ</name>
    <name type="ordered locus">STY4210</name>
    <name type="ordered locus">t3923</name>
</gene>
<feature type="chain" id="PRO_0000212090" description="Ribosomal RNA small subunit methyltransferase J">
    <location>
        <begin position="1"/>
        <end position="252"/>
    </location>
</feature>
<feature type="binding site" evidence="1">
    <location>
        <begin position="101"/>
        <end position="102"/>
    </location>
    <ligand>
        <name>S-adenosyl-L-methionine</name>
        <dbReference type="ChEBI" id="CHEBI:59789"/>
    </ligand>
</feature>
<feature type="binding site" evidence="1">
    <location>
        <begin position="117"/>
        <end position="118"/>
    </location>
    <ligand>
        <name>S-adenosyl-L-methionine</name>
        <dbReference type="ChEBI" id="CHEBI:59789"/>
    </ligand>
</feature>
<feature type="binding site" evidence="1">
    <location>
        <begin position="153"/>
        <end position="154"/>
    </location>
    <ligand>
        <name>S-adenosyl-L-methionine</name>
        <dbReference type="ChEBI" id="CHEBI:59789"/>
    </ligand>
</feature>
<feature type="binding site" evidence="1">
    <location>
        <position position="171"/>
    </location>
    <ligand>
        <name>S-adenosyl-L-methionine</name>
        <dbReference type="ChEBI" id="CHEBI:59789"/>
    </ligand>
</feature>